<keyword id="KW-0238">DNA-binding</keyword>
<keyword id="KW-0479">Metal-binding</keyword>
<keyword id="KW-0539">Nucleus</keyword>
<keyword id="KW-0675">Receptor</keyword>
<keyword id="KW-1185">Reference proteome</keyword>
<keyword id="KW-0804">Transcription</keyword>
<keyword id="KW-0805">Transcription regulation</keyword>
<keyword id="KW-0862">Zinc</keyword>
<keyword id="KW-0863">Zinc-finger</keyword>
<proteinExistence type="inferred from homology"/>
<protein>
    <recommendedName>
        <fullName>Nuclear hormone receptor family member nhr-12</fullName>
    </recommendedName>
</protein>
<sequence length="453" mass="52032">MEQIPQEQKTEPFLASFTTTEKLGTETPTTSITPNTQFRGRYEKPNCAVCNEVGDGLHFGAEACRACTAFFRRSVALSKKYECRAGRNCEVSSNIRCMCRSCRYDKCIEVGMNPECVQNRRENDTPKADLQFDTSKTEIRRPIPNFNIVPQASAVPSTSNFMDFSIFKDTPISNFSAFSPASLPGLSSSPSLETMPLLERMRINYDKMENARNVIHRREGENIFQQKVPRAITFREATEVTTKEVSLVADWIEWCFDDFGLLPVDQKTILFQNFFVFFCMLERAFMTVKSGRDGIVVMASKDYIDYDNLEGFFKECNSGTGGTPAEIAKLIRPSFELQKRSLINLMRLENVDSYEFFALCVMLFWDFGLEGQSDECNEVGRRVKHRVTREMTFYLRNVKKHEEPLYRMASVVSILPSLQRAVRRFQEDIEMANIFNIYALPENFVNIINGKFN</sequence>
<name>NHR12_CAEEL</name>
<feature type="chain" id="PRO_0000053765" description="Nuclear hormone receptor family member nhr-12">
    <location>
        <begin position="1"/>
        <end position="453"/>
    </location>
</feature>
<feature type="domain" description="NR LBD" evidence="2">
    <location>
        <begin position="178"/>
        <end position="451"/>
    </location>
</feature>
<feature type="DNA-binding region" description="Nuclear receptor" evidence="1">
    <location>
        <begin position="44"/>
        <end position="119"/>
    </location>
</feature>
<feature type="zinc finger region" description="NR C4-type" evidence="1">
    <location>
        <begin position="47"/>
        <end position="67"/>
    </location>
</feature>
<feature type="zinc finger region" description="NR C4-type" evidence="1">
    <location>
        <begin position="83"/>
        <end position="107"/>
    </location>
</feature>
<feature type="region of interest" description="Disordered" evidence="3">
    <location>
        <begin position="1"/>
        <end position="37"/>
    </location>
</feature>
<feature type="compositionally biased region" description="Low complexity" evidence="3">
    <location>
        <begin position="18"/>
        <end position="36"/>
    </location>
</feature>
<reference key="1">
    <citation type="journal article" date="1998" name="Science">
        <title>Genome sequence of the nematode C. elegans: a platform for investigating biology.</title>
        <authorList>
            <consortium name="The C. elegans sequencing consortium"/>
        </authorList>
    </citation>
    <scope>NUCLEOTIDE SEQUENCE [LARGE SCALE GENOMIC DNA]</scope>
    <source>
        <strain>Bristol N2</strain>
    </source>
</reference>
<evidence type="ECO:0000255" key="1">
    <source>
        <dbReference type="PROSITE-ProRule" id="PRU00407"/>
    </source>
</evidence>
<evidence type="ECO:0000255" key="2">
    <source>
        <dbReference type="PROSITE-ProRule" id="PRU01189"/>
    </source>
</evidence>
<evidence type="ECO:0000256" key="3">
    <source>
        <dbReference type="SAM" id="MobiDB-lite"/>
    </source>
</evidence>
<evidence type="ECO:0000305" key="4"/>
<comment type="function">
    <text>Orphan nuclear receptor.</text>
</comment>
<comment type="subcellular location">
    <subcellularLocation>
        <location evidence="1">Nucleus</location>
    </subcellularLocation>
</comment>
<comment type="similarity">
    <text evidence="4">Belongs to the nuclear hormone receptor family.</text>
</comment>
<organism>
    <name type="scientific">Caenorhabditis elegans</name>
    <dbReference type="NCBI Taxonomy" id="6239"/>
    <lineage>
        <taxon>Eukaryota</taxon>
        <taxon>Metazoa</taxon>
        <taxon>Ecdysozoa</taxon>
        <taxon>Nematoda</taxon>
        <taxon>Chromadorea</taxon>
        <taxon>Rhabditida</taxon>
        <taxon>Rhabditina</taxon>
        <taxon>Rhabditomorpha</taxon>
        <taxon>Rhabditoidea</taxon>
        <taxon>Rhabditidae</taxon>
        <taxon>Peloderinae</taxon>
        <taxon>Caenorhabditis</taxon>
    </lineage>
</organism>
<dbReference type="EMBL" id="Z70782">
    <property type="protein sequence ID" value="CAA94840.1"/>
    <property type="molecule type" value="Genomic_DNA"/>
</dbReference>
<dbReference type="PIR" id="T23888">
    <property type="entry name" value="T23888"/>
</dbReference>
<dbReference type="RefSeq" id="NP_505589.1">
    <property type="nucleotide sequence ID" value="NM_073188.7"/>
</dbReference>
<dbReference type="SMR" id="Q21701"/>
<dbReference type="BioGRID" id="44434">
    <property type="interactions" value="8"/>
</dbReference>
<dbReference type="DIP" id="DIP-26561N"/>
<dbReference type="FunCoup" id="Q21701">
    <property type="interactions" value="397"/>
</dbReference>
<dbReference type="IntAct" id="Q21701">
    <property type="interactions" value="6"/>
</dbReference>
<dbReference type="PaxDb" id="6239-R04B5.4b"/>
<dbReference type="EnsemblMetazoa" id="R04B5.4a.1">
    <property type="protein sequence ID" value="R04B5.4a.1"/>
    <property type="gene ID" value="WBGene00003611"/>
</dbReference>
<dbReference type="GeneID" id="179403"/>
<dbReference type="KEGG" id="cel:CELE_R04B5.4"/>
<dbReference type="UCSC" id="R04B5.4b">
    <property type="organism name" value="c. elegans"/>
</dbReference>
<dbReference type="AGR" id="WB:WBGene00003611"/>
<dbReference type="CTD" id="179403"/>
<dbReference type="WormBase" id="R04B5.4a">
    <property type="protein sequence ID" value="CE06214"/>
    <property type="gene ID" value="WBGene00003611"/>
    <property type="gene designation" value="nhr-12"/>
</dbReference>
<dbReference type="eggNOG" id="KOG3575">
    <property type="taxonomic scope" value="Eukaryota"/>
</dbReference>
<dbReference type="GeneTree" id="ENSGT00970000196284"/>
<dbReference type="InParanoid" id="Q21701"/>
<dbReference type="OrthoDB" id="5830034at2759"/>
<dbReference type="SignaLink" id="Q21701"/>
<dbReference type="PRO" id="PR:Q21701"/>
<dbReference type="Proteomes" id="UP000001940">
    <property type="component" value="Chromosome V"/>
</dbReference>
<dbReference type="Bgee" id="WBGene00003611">
    <property type="expression patterns" value="Expressed in germ line (C elegans) and 4 other cell types or tissues"/>
</dbReference>
<dbReference type="ExpressionAtlas" id="Q21701">
    <property type="expression patterns" value="baseline and differential"/>
</dbReference>
<dbReference type="GO" id="GO:0005634">
    <property type="term" value="C:nucleus"/>
    <property type="evidence" value="ECO:0000318"/>
    <property type="project" value="GO_Central"/>
</dbReference>
<dbReference type="GO" id="GO:0003700">
    <property type="term" value="F:DNA-binding transcription factor activity"/>
    <property type="evidence" value="ECO:0000318"/>
    <property type="project" value="GO_Central"/>
</dbReference>
<dbReference type="GO" id="GO:0000978">
    <property type="term" value="F:RNA polymerase II cis-regulatory region sequence-specific DNA binding"/>
    <property type="evidence" value="ECO:0007669"/>
    <property type="project" value="InterPro"/>
</dbReference>
<dbReference type="GO" id="GO:0008270">
    <property type="term" value="F:zinc ion binding"/>
    <property type="evidence" value="ECO:0007669"/>
    <property type="project" value="UniProtKB-KW"/>
</dbReference>
<dbReference type="GO" id="GO:0006357">
    <property type="term" value="P:regulation of transcription by RNA polymerase II"/>
    <property type="evidence" value="ECO:0000318"/>
    <property type="project" value="GO_Central"/>
</dbReference>
<dbReference type="CDD" id="cd06960">
    <property type="entry name" value="NR_DBD_HNF4A"/>
    <property type="match status" value="1"/>
</dbReference>
<dbReference type="Gene3D" id="3.30.50.10">
    <property type="entry name" value="Erythroid Transcription Factor GATA-1, subunit A"/>
    <property type="match status" value="1"/>
</dbReference>
<dbReference type="Gene3D" id="1.10.565.10">
    <property type="entry name" value="Retinoid X Receptor"/>
    <property type="match status" value="1"/>
</dbReference>
<dbReference type="InterPro" id="IPR049636">
    <property type="entry name" value="HNF4-like_DBD"/>
</dbReference>
<dbReference type="InterPro" id="IPR035500">
    <property type="entry name" value="NHR-like_dom_sf"/>
</dbReference>
<dbReference type="InterPro" id="IPR000536">
    <property type="entry name" value="Nucl_hrmn_rcpt_lig-bd"/>
</dbReference>
<dbReference type="InterPro" id="IPR001628">
    <property type="entry name" value="Znf_hrmn_rcpt"/>
</dbReference>
<dbReference type="InterPro" id="IPR013088">
    <property type="entry name" value="Znf_NHR/GATA"/>
</dbReference>
<dbReference type="PANTHER" id="PTHR46011">
    <property type="entry name" value="NUCLEAR HORMONE RECEPTOR FAMILY MEMBER NHR-86-RELATED"/>
    <property type="match status" value="1"/>
</dbReference>
<dbReference type="PANTHER" id="PTHR46011:SF7">
    <property type="entry name" value="NUCLEAR HORMONE RECEPTOR FAMILY-RELATED"/>
    <property type="match status" value="1"/>
</dbReference>
<dbReference type="Pfam" id="PF00104">
    <property type="entry name" value="Hormone_recep"/>
    <property type="match status" value="1"/>
</dbReference>
<dbReference type="Pfam" id="PF00105">
    <property type="entry name" value="zf-C4"/>
    <property type="match status" value="1"/>
</dbReference>
<dbReference type="PRINTS" id="PR00047">
    <property type="entry name" value="STROIDFINGER"/>
</dbReference>
<dbReference type="SMART" id="SM00430">
    <property type="entry name" value="HOLI"/>
    <property type="match status" value="1"/>
</dbReference>
<dbReference type="SMART" id="SM00399">
    <property type="entry name" value="ZnF_C4"/>
    <property type="match status" value="1"/>
</dbReference>
<dbReference type="SUPFAM" id="SSF57716">
    <property type="entry name" value="Glucocorticoid receptor-like (DNA-binding domain)"/>
    <property type="match status" value="1"/>
</dbReference>
<dbReference type="SUPFAM" id="SSF48508">
    <property type="entry name" value="Nuclear receptor ligand-binding domain"/>
    <property type="match status" value="1"/>
</dbReference>
<dbReference type="PROSITE" id="PS51843">
    <property type="entry name" value="NR_LBD"/>
    <property type="match status" value="1"/>
</dbReference>
<dbReference type="PROSITE" id="PS00031">
    <property type="entry name" value="NUCLEAR_REC_DBD_1"/>
    <property type="match status" value="1"/>
</dbReference>
<dbReference type="PROSITE" id="PS51030">
    <property type="entry name" value="NUCLEAR_REC_DBD_2"/>
    <property type="match status" value="1"/>
</dbReference>
<accession>Q21701</accession>
<gene>
    <name type="primary">nhr-12</name>
    <name type="ORF">R04B5.4</name>
</gene>